<accession>B8DC39</accession>
<reference key="1">
    <citation type="journal article" date="2011" name="J. Bacteriol.">
        <title>Genome sequence of lineage III Listeria monocytogenes strain HCC23.</title>
        <authorList>
            <person name="Steele C.L."/>
            <person name="Donaldson J.R."/>
            <person name="Paul D."/>
            <person name="Banes M.M."/>
            <person name="Arick T."/>
            <person name="Bridges S.M."/>
            <person name="Lawrence M.L."/>
        </authorList>
    </citation>
    <scope>NUCLEOTIDE SEQUENCE [LARGE SCALE GENOMIC DNA]</scope>
    <source>
        <strain>HCC23</strain>
    </source>
</reference>
<sequence length="373" mass="40318">MEDFIYYNGKKYRKGYTTGTCAAAAAKACVEMILTQEEVSAVQVTTTGGTILEIPVAYQKFSKDKATAAVQKDGGDDIDATHGMWIFVDVDLTDNAEVVLDGGVGIGRATQKGISVAVGEAAINPAPRKNILATVRESLGENRGAKILVYAPEGEERAKRTMNSNLGIIGGISILGTTGIVTPMSDEGWKKSLSMELEMKRNQGLDQIILVPGNYGDDFVQNTLGFSSGNIVSMSNFVGYMLKETQRLAFKKVLMVGHFGKLVKVSAGIFTTYSKDADARAEILVANLALLGAPLSLLQAVEKCNTTEAAGEFIEEAGFTQVYDVIVQKIKARSERFLKFTKPSVEVDVVTFSTERGLLAATKDIDVLREEWR</sequence>
<keyword id="KW-0169">Cobalamin biosynthesis</keyword>
<keyword id="KW-0489">Methyltransferase</keyword>
<keyword id="KW-0949">S-adenosyl-L-methionine</keyword>
<keyword id="KW-0808">Transferase</keyword>
<feature type="chain" id="PRO_1000148481" description="Cobalt-precorrin-5B C(1)-methyltransferase">
    <location>
        <begin position="1"/>
        <end position="373"/>
    </location>
</feature>
<protein>
    <recommendedName>
        <fullName evidence="1">Cobalt-precorrin-5B C(1)-methyltransferase</fullName>
        <ecNumber evidence="1">2.1.1.195</ecNumber>
    </recommendedName>
    <alternativeName>
        <fullName evidence="1">Cobalt-precorrin-6A synthase</fullName>
    </alternativeName>
</protein>
<comment type="function">
    <text evidence="1">Catalyzes the methylation of C-1 in cobalt-precorrin-5B to form cobalt-precorrin-6A.</text>
</comment>
<comment type="catalytic activity">
    <reaction evidence="1">
        <text>Co-precorrin-5B + S-adenosyl-L-methionine = Co-precorrin-6A + S-adenosyl-L-homocysteine</text>
        <dbReference type="Rhea" id="RHEA:26285"/>
        <dbReference type="ChEBI" id="CHEBI:57856"/>
        <dbReference type="ChEBI" id="CHEBI:59789"/>
        <dbReference type="ChEBI" id="CHEBI:60063"/>
        <dbReference type="ChEBI" id="CHEBI:60064"/>
        <dbReference type="EC" id="2.1.1.195"/>
    </reaction>
</comment>
<comment type="pathway">
    <text evidence="1">Cofactor biosynthesis; adenosylcobalamin biosynthesis; cob(II)yrinate a,c-diamide from sirohydrochlorin (anaerobic route): step 6/10.</text>
</comment>
<comment type="similarity">
    <text evidence="1">Belongs to the CbiD family.</text>
</comment>
<proteinExistence type="inferred from homology"/>
<gene>
    <name evidence="1" type="primary">cbiD</name>
    <name type="ordered locus">LMHCC_1457</name>
</gene>
<dbReference type="EC" id="2.1.1.195" evidence="1"/>
<dbReference type="EMBL" id="CP001175">
    <property type="protein sequence ID" value="ACK39802.1"/>
    <property type="molecule type" value="Genomic_DNA"/>
</dbReference>
<dbReference type="RefSeq" id="WP_012581516.1">
    <property type="nucleotide sequence ID" value="NC_011660.1"/>
</dbReference>
<dbReference type="SMR" id="B8DC39"/>
<dbReference type="KEGG" id="lmh:LMHCC_1457"/>
<dbReference type="HOGENOM" id="CLU_041273_1_0_9"/>
<dbReference type="UniPathway" id="UPA00148">
    <property type="reaction ID" value="UER00227"/>
</dbReference>
<dbReference type="GO" id="GO:0043780">
    <property type="term" value="F:cobalt-precorrin-5B C1-methyltransferase activity"/>
    <property type="evidence" value="ECO:0007669"/>
    <property type="project" value="RHEA"/>
</dbReference>
<dbReference type="GO" id="GO:0019251">
    <property type="term" value="P:anaerobic cobalamin biosynthetic process"/>
    <property type="evidence" value="ECO:0007669"/>
    <property type="project" value="UniProtKB-UniRule"/>
</dbReference>
<dbReference type="GO" id="GO:0032259">
    <property type="term" value="P:methylation"/>
    <property type="evidence" value="ECO:0007669"/>
    <property type="project" value="UniProtKB-KW"/>
</dbReference>
<dbReference type="Gene3D" id="3.30.2110.10">
    <property type="entry name" value="CbiD-like"/>
    <property type="match status" value="1"/>
</dbReference>
<dbReference type="HAMAP" id="MF_00787">
    <property type="entry name" value="CbiD"/>
    <property type="match status" value="1"/>
</dbReference>
<dbReference type="InterPro" id="IPR002748">
    <property type="entry name" value="CbiD"/>
</dbReference>
<dbReference type="InterPro" id="IPR036074">
    <property type="entry name" value="CbiD_sf"/>
</dbReference>
<dbReference type="NCBIfam" id="TIGR00312">
    <property type="entry name" value="cbiD"/>
    <property type="match status" value="1"/>
</dbReference>
<dbReference type="PANTHER" id="PTHR35863">
    <property type="entry name" value="COBALT-PRECORRIN-5B C(1)-METHYLTRANSFERASE"/>
    <property type="match status" value="1"/>
</dbReference>
<dbReference type="PANTHER" id="PTHR35863:SF1">
    <property type="entry name" value="COBALT-PRECORRIN-5B C(1)-METHYLTRANSFERASE"/>
    <property type="match status" value="1"/>
</dbReference>
<dbReference type="Pfam" id="PF01888">
    <property type="entry name" value="CbiD"/>
    <property type="match status" value="1"/>
</dbReference>
<dbReference type="PIRSF" id="PIRSF026782">
    <property type="entry name" value="CbiD"/>
    <property type="match status" value="1"/>
</dbReference>
<dbReference type="SUPFAM" id="SSF111342">
    <property type="entry name" value="CbiD-like"/>
    <property type="match status" value="1"/>
</dbReference>
<organism>
    <name type="scientific">Listeria monocytogenes serotype 4a (strain HCC23)</name>
    <dbReference type="NCBI Taxonomy" id="552536"/>
    <lineage>
        <taxon>Bacteria</taxon>
        <taxon>Bacillati</taxon>
        <taxon>Bacillota</taxon>
        <taxon>Bacilli</taxon>
        <taxon>Bacillales</taxon>
        <taxon>Listeriaceae</taxon>
        <taxon>Listeria</taxon>
    </lineage>
</organism>
<name>CBID_LISMH</name>
<evidence type="ECO:0000255" key="1">
    <source>
        <dbReference type="HAMAP-Rule" id="MF_00787"/>
    </source>
</evidence>